<name>Y2144_RHORT</name>
<comment type="similarity">
    <text evidence="1">Belongs to the UPF0386 family.</text>
</comment>
<comment type="sequence caution" evidence="2">
    <conflict type="erroneous initiation">
        <sequence resource="EMBL-CDS" id="ABC22944"/>
    </conflict>
</comment>
<gene>
    <name type="ordered locus">Rru_A2144</name>
</gene>
<keyword id="KW-1185">Reference proteome</keyword>
<feature type="chain" id="PRO_0000252186" description="UPF0386 protein Rru_A2144">
    <location>
        <begin position="1"/>
        <end position="90"/>
    </location>
</feature>
<evidence type="ECO:0000255" key="1">
    <source>
        <dbReference type="HAMAP-Rule" id="MF_00827"/>
    </source>
</evidence>
<evidence type="ECO:0000305" key="2"/>
<proteinExistence type="inferred from homology"/>
<organism>
    <name type="scientific">Rhodospirillum rubrum (strain ATCC 11170 / ATH 1.1.1 / DSM 467 / LMG 4362 / NCIMB 8255 / S1)</name>
    <dbReference type="NCBI Taxonomy" id="269796"/>
    <lineage>
        <taxon>Bacteria</taxon>
        <taxon>Pseudomonadati</taxon>
        <taxon>Pseudomonadota</taxon>
        <taxon>Alphaproteobacteria</taxon>
        <taxon>Rhodospirillales</taxon>
        <taxon>Rhodospirillaceae</taxon>
        <taxon>Rhodospirillum</taxon>
    </lineage>
</organism>
<dbReference type="EMBL" id="CP000230">
    <property type="protein sequence ID" value="ABC22944.1"/>
    <property type="status" value="ALT_INIT"/>
    <property type="molecule type" value="Genomic_DNA"/>
</dbReference>
<dbReference type="RefSeq" id="WP_011389993.1">
    <property type="nucleotide sequence ID" value="NC_007643.1"/>
</dbReference>
<dbReference type="RefSeq" id="YP_427231.2">
    <property type="nucleotide sequence ID" value="NC_007643.1"/>
</dbReference>
<dbReference type="STRING" id="269796.Rru_A2144"/>
<dbReference type="EnsemblBacteria" id="ABC22944">
    <property type="protein sequence ID" value="ABC22944"/>
    <property type="gene ID" value="Rru_A2144"/>
</dbReference>
<dbReference type="KEGG" id="rru:Rru_A2144"/>
<dbReference type="PATRIC" id="fig|269796.9.peg.2237"/>
<dbReference type="eggNOG" id="COG3811">
    <property type="taxonomic scope" value="Bacteria"/>
</dbReference>
<dbReference type="HOGENOM" id="CLU_164736_0_0_5"/>
<dbReference type="PhylomeDB" id="Q2RSF1"/>
<dbReference type="Proteomes" id="UP000001929">
    <property type="component" value="Chromosome"/>
</dbReference>
<dbReference type="HAMAP" id="MF_00827">
    <property type="entry name" value="UPF0386"/>
    <property type="match status" value="1"/>
</dbReference>
<dbReference type="InterPro" id="IPR018654">
    <property type="entry name" value="YjhX_toxin"/>
</dbReference>
<dbReference type="NCBIfam" id="NF010240">
    <property type="entry name" value="PRK13687.1"/>
    <property type="match status" value="1"/>
</dbReference>
<dbReference type="Pfam" id="PF09857">
    <property type="entry name" value="YjhX_toxin"/>
    <property type="match status" value="1"/>
</dbReference>
<reference key="1">
    <citation type="journal article" date="2011" name="Stand. Genomic Sci.">
        <title>Complete genome sequence of Rhodospirillum rubrum type strain (S1).</title>
        <authorList>
            <person name="Munk A.C."/>
            <person name="Copeland A."/>
            <person name="Lucas S."/>
            <person name="Lapidus A."/>
            <person name="Del Rio T.G."/>
            <person name="Barry K."/>
            <person name="Detter J.C."/>
            <person name="Hammon N."/>
            <person name="Israni S."/>
            <person name="Pitluck S."/>
            <person name="Brettin T."/>
            <person name="Bruce D."/>
            <person name="Han C."/>
            <person name="Tapia R."/>
            <person name="Gilna P."/>
            <person name="Schmutz J."/>
            <person name="Larimer F."/>
            <person name="Land M."/>
            <person name="Kyrpides N.C."/>
            <person name="Mavromatis K."/>
            <person name="Richardson P."/>
            <person name="Rohde M."/>
            <person name="Goeker M."/>
            <person name="Klenk H.P."/>
            <person name="Zhang Y."/>
            <person name="Roberts G.P."/>
            <person name="Reslewic S."/>
            <person name="Schwartz D.C."/>
        </authorList>
    </citation>
    <scope>NUCLEOTIDE SEQUENCE [LARGE SCALE GENOMIC DNA]</scope>
    <source>
        <strain>ATCC 11170 / ATH 1.1.1 / DSM 467 / LMG 4362 / NCIMB 8255 / S1</strain>
    </source>
</reference>
<sequence length="90" mass="10035">MTISRTEQRVLHVLALGGRILHERGEGPKITTITCVTRDGLILADCDLAVFSRLRRRRLIESRAGGPYRLSPLGRAMVRPQSDNQGHITC</sequence>
<accession>Q2RSF1</accession>
<protein>
    <recommendedName>
        <fullName evidence="1">UPF0386 protein Rru_A2144</fullName>
    </recommendedName>
</protein>